<name>GRP_ONCMY</name>
<accession>Q9PS30</accession>
<evidence type="ECO:0000250" key="1">
    <source>
        <dbReference type="UniProtKB" id="P07492"/>
    </source>
</evidence>
<evidence type="ECO:0000250" key="2">
    <source>
        <dbReference type="UniProtKB" id="P63153"/>
    </source>
</evidence>
<evidence type="ECO:0000250" key="3">
    <source>
        <dbReference type="UniProtKB" id="Q863C3"/>
    </source>
</evidence>
<evidence type="ECO:0000269" key="4">
    <source>
    </source>
</evidence>
<evidence type="ECO:0000305" key="5"/>
<comment type="function">
    <text evidence="2">Stimulates the release of gastrin and other gastrointestinal hormones.</text>
</comment>
<comment type="subcellular location">
    <subcellularLocation>
        <location evidence="1">Secreted</location>
    </subcellularLocation>
    <subcellularLocation>
        <location evidence="3">Cytoplasmic vesicle</location>
        <location evidence="3">Secretory vesicle lumen</location>
    </subcellularLocation>
</comment>
<comment type="similarity">
    <text evidence="5">Belongs to the bombesin/neuromedin-B/ranatensin family.</text>
</comment>
<feature type="peptide" id="PRO_0000043497" description="Gastrin-releasing peptide" evidence="4">
    <location>
        <begin position="1"/>
        <end position="23"/>
    </location>
</feature>
<feature type="modified residue" description="Methionine amide" evidence="4">
    <location>
        <position position="23"/>
    </location>
</feature>
<sequence>SENTGAIGKVFPRGNHWAVGHLM</sequence>
<keyword id="KW-0027">Amidation</keyword>
<keyword id="KW-0968">Cytoplasmic vesicle</keyword>
<keyword id="KW-0903">Direct protein sequencing</keyword>
<keyword id="KW-0964">Secreted</keyword>
<organism>
    <name type="scientific">Oncorhynchus mykiss</name>
    <name type="common">Rainbow trout</name>
    <name type="synonym">Salmo gairdneri</name>
    <dbReference type="NCBI Taxonomy" id="8022"/>
    <lineage>
        <taxon>Eukaryota</taxon>
        <taxon>Metazoa</taxon>
        <taxon>Chordata</taxon>
        <taxon>Craniata</taxon>
        <taxon>Vertebrata</taxon>
        <taxon>Euteleostomi</taxon>
        <taxon>Actinopterygii</taxon>
        <taxon>Neopterygii</taxon>
        <taxon>Teleostei</taxon>
        <taxon>Protacanthopterygii</taxon>
        <taxon>Salmoniformes</taxon>
        <taxon>Salmonidae</taxon>
        <taxon>Salmoninae</taxon>
        <taxon>Oncorhynchus</taxon>
    </lineage>
</organism>
<proteinExistence type="evidence at protein level"/>
<dbReference type="Proteomes" id="UP000694395">
    <property type="component" value="Unplaced"/>
</dbReference>
<dbReference type="GO" id="GO:0044297">
    <property type="term" value="C:cell body"/>
    <property type="evidence" value="ECO:0000314"/>
    <property type="project" value="AgBase"/>
</dbReference>
<dbReference type="GO" id="GO:0070852">
    <property type="term" value="C:cell body fiber"/>
    <property type="evidence" value="ECO:0000314"/>
    <property type="project" value="AgBase"/>
</dbReference>
<dbReference type="GO" id="GO:0005615">
    <property type="term" value="C:extracellular space"/>
    <property type="evidence" value="ECO:0000250"/>
    <property type="project" value="UniProtKB"/>
</dbReference>
<dbReference type="GO" id="GO:0034774">
    <property type="term" value="C:secretory granule lumen"/>
    <property type="evidence" value="ECO:0000250"/>
    <property type="project" value="UniProtKB"/>
</dbReference>
<dbReference type="GO" id="GO:0007218">
    <property type="term" value="P:neuropeptide signaling pathway"/>
    <property type="evidence" value="ECO:0007669"/>
    <property type="project" value="InterPro"/>
</dbReference>
<dbReference type="GO" id="GO:0090277">
    <property type="term" value="P:positive regulation of peptide hormone secretion"/>
    <property type="evidence" value="ECO:0000250"/>
    <property type="project" value="UniProtKB"/>
</dbReference>
<dbReference type="GO" id="GO:1900738">
    <property type="term" value="P:positive regulation of phospholipase C-activating G protein-coupled receptor signaling pathway"/>
    <property type="evidence" value="ECO:0000250"/>
    <property type="project" value="UniProtKB"/>
</dbReference>
<dbReference type="InterPro" id="IPR000874">
    <property type="entry name" value="Bombesin"/>
</dbReference>
<dbReference type="Pfam" id="PF02044">
    <property type="entry name" value="Bombesin"/>
    <property type="match status" value="1"/>
</dbReference>
<dbReference type="PROSITE" id="PS00257">
    <property type="entry name" value="BOMBESIN"/>
    <property type="match status" value="1"/>
</dbReference>
<protein>
    <recommendedName>
        <fullName>Gastrin-releasing peptide</fullName>
        <shortName>GRP</shortName>
    </recommendedName>
</protein>
<gene>
    <name type="primary">grp</name>
</gene>
<reference key="1">
    <citation type="journal article" date="1992" name="Peptides">
        <title>Isolation and primary structure of gastrin-releasing peptide from a teleost fish, the trout (Oncorhynchus mykiss).</title>
        <authorList>
            <person name="Jensen J."/>
            <person name="Conlon J.M."/>
        </authorList>
    </citation>
    <scope>PROTEIN SEQUENCE</scope>
    <scope>AMIDATION AT MET-23</scope>
    <source>
        <tissue>Stomach</tissue>
    </source>
</reference>